<organism>
    <name type="scientific">Serratia marcescens</name>
    <dbReference type="NCBI Taxonomy" id="615"/>
    <lineage>
        <taxon>Bacteria</taxon>
        <taxon>Pseudomonadati</taxon>
        <taxon>Pseudomonadota</taxon>
        <taxon>Gammaproteobacteria</taxon>
        <taxon>Enterobacterales</taxon>
        <taxon>Yersiniaceae</taxon>
        <taxon>Serratia</taxon>
    </lineage>
</organism>
<accession>P55757</accession>
<keyword id="KW-0963">Cytoplasm</keyword>
<proteinExistence type="inferred from homology"/>
<protein>
    <recommendedName>
        <fullName>Uncharacterized protein in bioA 5'region</fullName>
    </recommendedName>
</protein>
<dbReference type="EMBL" id="D17468">
    <property type="status" value="NOT_ANNOTATED_CDS"/>
    <property type="molecule type" value="Genomic_DNA"/>
</dbReference>
<dbReference type="RefSeq" id="WP_025301915.1">
    <property type="nucleotide sequence ID" value="NZ_WVHW01000008.1"/>
</dbReference>
<dbReference type="SMR" id="P55757"/>
<dbReference type="STRING" id="273526.SMDB11_0557"/>
<dbReference type="GeneID" id="87005807"/>
<dbReference type="PATRIC" id="fig|615.103.peg.619"/>
<dbReference type="GO" id="GO:0005737">
    <property type="term" value="C:cytoplasm"/>
    <property type="evidence" value="ECO:0007669"/>
    <property type="project" value="UniProtKB-SubCell"/>
</dbReference>
<dbReference type="GO" id="GO:0003677">
    <property type="term" value="F:DNA binding"/>
    <property type="evidence" value="ECO:0007669"/>
    <property type="project" value="InterPro"/>
</dbReference>
<dbReference type="GO" id="GO:0046872">
    <property type="term" value="F:metal ion binding"/>
    <property type="evidence" value="ECO:0007669"/>
    <property type="project" value="InterPro"/>
</dbReference>
<dbReference type="GO" id="GO:0045892">
    <property type="term" value="P:negative regulation of DNA-templated transcription"/>
    <property type="evidence" value="ECO:0007669"/>
    <property type="project" value="UniProtKB-ARBA"/>
</dbReference>
<dbReference type="CDD" id="cd10153">
    <property type="entry name" value="RcnR-FrmR-like_DUF156"/>
    <property type="match status" value="1"/>
</dbReference>
<dbReference type="Gene3D" id="1.20.58.1000">
    <property type="entry name" value="Metal-sensitive repressor, helix protomer"/>
    <property type="match status" value="1"/>
</dbReference>
<dbReference type="InterPro" id="IPR003735">
    <property type="entry name" value="Metal_Tscrpt_repr"/>
</dbReference>
<dbReference type="InterPro" id="IPR038390">
    <property type="entry name" value="Metal_Tscrpt_repr_sf"/>
</dbReference>
<dbReference type="PANTHER" id="PTHR33677:SF5">
    <property type="entry name" value="TRANSCRIPTIONAL REPRESSOR FRMR"/>
    <property type="match status" value="1"/>
</dbReference>
<dbReference type="PANTHER" id="PTHR33677">
    <property type="entry name" value="TRANSCRIPTIONAL REPRESSOR FRMR-RELATED"/>
    <property type="match status" value="1"/>
</dbReference>
<dbReference type="Pfam" id="PF02583">
    <property type="entry name" value="Trns_repr_metal"/>
    <property type="match status" value="1"/>
</dbReference>
<sequence>MSHTHRDQKKLLARVRRIKGQAEALERALESGGECSAVLQQIAAVRGAVNGLMAQVLEGHVREHLAAADATPQQREQDIEQLMTVLRSYMK</sequence>
<evidence type="ECO:0000305" key="1"/>
<feature type="chain" id="PRO_0000169146" description="Uncharacterized protein in bioA 5'region">
    <location>
        <begin position="1"/>
        <end position="91"/>
    </location>
</feature>
<reference key="1">
    <citation type="submission" date="1993-08" db="EMBL/GenBank/DDBJ databases">
        <authorList>
            <person name="Sakurai N."/>
            <person name="Imai Y."/>
            <person name="Akatsuka H."/>
            <person name="Kawai E."/>
            <person name="Komatsubara S."/>
            <person name="Tosa T."/>
        </authorList>
    </citation>
    <scope>NUCLEOTIDE SEQUENCE [GENOMIC DNA]</scope>
    <source>
        <strain>Sr41</strain>
    </source>
</reference>
<reference key="2">
    <citation type="unpublished observations" date="1996-03">
        <authorList>
            <person name="Rudd K.E."/>
        </authorList>
    </citation>
    <scope>IDENTIFICATION</scope>
</reference>
<name>YBIOA_SERMA</name>
<comment type="subcellular location">
    <subcellularLocation>
        <location evidence="1">Cytoplasm</location>
    </subcellularLocation>
</comment>
<comment type="similarity">
    <text evidence="1">Belongs to the FrmR/RcnR family.</text>
</comment>